<protein>
    <recommendedName>
        <fullName>Acidic phospholipase A2 2</fullName>
        <shortName>svPLA2</shortName>
        <ecNumber>3.1.1.4</ecNumber>
    </recommendedName>
    <alternativeName>
        <fullName>Phosphatidylcholine 2-acylhydrolase</fullName>
    </alternativeName>
    <alternativeName>
        <fullName>Pt-PLA2</fullName>
    </alternativeName>
</protein>
<dbReference type="EC" id="3.1.1.4"/>
<dbReference type="EMBL" id="AF082984">
    <property type="protein sequence ID" value="AAD40976.1"/>
    <property type="molecule type" value="mRNA"/>
</dbReference>
<dbReference type="EMBL" id="AY027495">
    <property type="protein sequence ID" value="AAK15776.1"/>
    <property type="molecule type" value="Genomic_DNA"/>
</dbReference>
<dbReference type="SMR" id="Q9W7J3"/>
<dbReference type="Proteomes" id="UP000472273">
    <property type="component" value="Unplaced"/>
</dbReference>
<dbReference type="GO" id="GO:0005576">
    <property type="term" value="C:extracellular region"/>
    <property type="evidence" value="ECO:0007669"/>
    <property type="project" value="UniProtKB-SubCell"/>
</dbReference>
<dbReference type="GO" id="GO:0005509">
    <property type="term" value="F:calcium ion binding"/>
    <property type="evidence" value="ECO:0007669"/>
    <property type="project" value="InterPro"/>
</dbReference>
<dbReference type="GO" id="GO:0047498">
    <property type="term" value="F:calcium-dependent phospholipase A2 activity"/>
    <property type="evidence" value="ECO:0007669"/>
    <property type="project" value="TreeGrafter"/>
</dbReference>
<dbReference type="GO" id="GO:0005543">
    <property type="term" value="F:phospholipid binding"/>
    <property type="evidence" value="ECO:0007669"/>
    <property type="project" value="TreeGrafter"/>
</dbReference>
<dbReference type="GO" id="GO:0005102">
    <property type="term" value="F:signaling receptor binding"/>
    <property type="evidence" value="ECO:0007669"/>
    <property type="project" value="TreeGrafter"/>
</dbReference>
<dbReference type="GO" id="GO:0090729">
    <property type="term" value="F:toxin activity"/>
    <property type="evidence" value="ECO:0007669"/>
    <property type="project" value="UniProtKB-KW"/>
</dbReference>
<dbReference type="GO" id="GO:0050482">
    <property type="term" value="P:arachidonate secretion"/>
    <property type="evidence" value="ECO:0007669"/>
    <property type="project" value="InterPro"/>
</dbReference>
<dbReference type="GO" id="GO:0006633">
    <property type="term" value="P:fatty acid biosynthetic process"/>
    <property type="evidence" value="ECO:0007669"/>
    <property type="project" value="TreeGrafter"/>
</dbReference>
<dbReference type="GO" id="GO:0016042">
    <property type="term" value="P:lipid catabolic process"/>
    <property type="evidence" value="ECO:0007669"/>
    <property type="project" value="UniProtKB-KW"/>
</dbReference>
<dbReference type="GO" id="GO:0006644">
    <property type="term" value="P:phospholipid metabolic process"/>
    <property type="evidence" value="ECO:0007669"/>
    <property type="project" value="InterPro"/>
</dbReference>
<dbReference type="GO" id="GO:0048146">
    <property type="term" value="P:positive regulation of fibroblast proliferation"/>
    <property type="evidence" value="ECO:0007669"/>
    <property type="project" value="TreeGrafter"/>
</dbReference>
<dbReference type="CDD" id="cd00125">
    <property type="entry name" value="PLA2c"/>
    <property type="match status" value="1"/>
</dbReference>
<dbReference type="FunFam" id="1.20.90.10:FF:000007">
    <property type="entry name" value="Acidic phospholipase A2"/>
    <property type="match status" value="1"/>
</dbReference>
<dbReference type="Gene3D" id="1.20.90.10">
    <property type="entry name" value="Phospholipase A2 domain"/>
    <property type="match status" value="1"/>
</dbReference>
<dbReference type="InterPro" id="IPR001211">
    <property type="entry name" value="PLipase_A2"/>
</dbReference>
<dbReference type="InterPro" id="IPR033112">
    <property type="entry name" value="PLipase_A2_Asp_AS"/>
</dbReference>
<dbReference type="InterPro" id="IPR016090">
    <property type="entry name" value="PLipase_A2_dom"/>
</dbReference>
<dbReference type="InterPro" id="IPR036444">
    <property type="entry name" value="PLipase_A2_dom_sf"/>
</dbReference>
<dbReference type="InterPro" id="IPR033113">
    <property type="entry name" value="PLipase_A2_His_AS"/>
</dbReference>
<dbReference type="PANTHER" id="PTHR11716:SF94">
    <property type="entry name" value="PHOSPHOLIPASE A2"/>
    <property type="match status" value="1"/>
</dbReference>
<dbReference type="PANTHER" id="PTHR11716">
    <property type="entry name" value="PHOSPHOLIPASE A2 FAMILY MEMBER"/>
    <property type="match status" value="1"/>
</dbReference>
<dbReference type="Pfam" id="PF00068">
    <property type="entry name" value="Phospholip_A2_1"/>
    <property type="match status" value="1"/>
</dbReference>
<dbReference type="PRINTS" id="PR00389">
    <property type="entry name" value="PHPHLIPASEA2"/>
</dbReference>
<dbReference type="SMART" id="SM00085">
    <property type="entry name" value="PA2c"/>
    <property type="match status" value="1"/>
</dbReference>
<dbReference type="SUPFAM" id="SSF48619">
    <property type="entry name" value="Phospholipase A2, PLA2"/>
    <property type="match status" value="1"/>
</dbReference>
<dbReference type="PROSITE" id="PS00119">
    <property type="entry name" value="PA2_ASP"/>
    <property type="match status" value="1"/>
</dbReference>
<dbReference type="PROSITE" id="PS00118">
    <property type="entry name" value="PA2_HIS"/>
    <property type="match status" value="1"/>
</dbReference>
<comment type="function">
    <text evidence="5">Snake venom phospholipase A2 (PLA2) that shows moderate enzymatic activity and exhibits procoagulant activity. PLA2 catalyzes the calcium-dependent hydrolysis of the 2-acyl groups in 3-sn-phosphoglycerides.</text>
</comment>
<comment type="catalytic activity">
    <reaction evidence="3 4">
        <text>a 1,2-diacyl-sn-glycero-3-phosphocholine + H2O = a 1-acyl-sn-glycero-3-phosphocholine + a fatty acid + H(+)</text>
        <dbReference type="Rhea" id="RHEA:15801"/>
        <dbReference type="ChEBI" id="CHEBI:15377"/>
        <dbReference type="ChEBI" id="CHEBI:15378"/>
        <dbReference type="ChEBI" id="CHEBI:28868"/>
        <dbReference type="ChEBI" id="CHEBI:57643"/>
        <dbReference type="ChEBI" id="CHEBI:58168"/>
        <dbReference type="EC" id="3.1.1.4"/>
    </reaction>
</comment>
<comment type="cofactor">
    <cofactor evidence="1">
        <name>Ca(2+)</name>
        <dbReference type="ChEBI" id="CHEBI:29108"/>
    </cofactor>
    <text evidence="1">Binds 1 Ca(2+) ion.</text>
</comment>
<comment type="subunit">
    <text>Monomer.</text>
</comment>
<comment type="subcellular location">
    <subcellularLocation>
        <location evidence="1">Secreted</location>
    </subcellularLocation>
</comment>
<comment type="tissue specificity">
    <text>Expressed by the venom gland.</text>
</comment>
<comment type="similarity">
    <text evidence="6">Belongs to the phospholipase A2 family. Group I subfamily. D49 sub-subfamily.</text>
</comment>
<reference key="1">
    <citation type="journal article" date="2004" name="Arch. Biochem. Biophys.">
        <title>Group IB phospholipase A2 from Pseudonaja textilis.</title>
        <authorList>
            <person name="Armugam A."/>
            <person name="Gong N.L."/>
            <person name="Li X.J."/>
            <person name="Siew P.Y."/>
            <person name="Chai S.C."/>
            <person name="Nair R."/>
            <person name="Jeyaseelan K."/>
        </authorList>
    </citation>
    <scope>NUCLEOTIDE SEQUENCE [MRNA]</scope>
    <scope>PROTEIN SEQUENCE OF 28-40</scope>
    <scope>FUNCTION</scope>
    <source>
        <tissue>Venom</tissue>
        <tissue>Venom gland</tissue>
    </source>
</reference>
<reference key="2">
    <citation type="journal article" date="2006" name="Mol. Cell. Proteomics">
        <title>Molecular diversity in venom from the Australian Brown snake, Pseudonaja textilis.</title>
        <authorList>
            <person name="Birrell G.W."/>
            <person name="Earl S."/>
            <person name="Masci P.P."/>
            <person name="de Jersey J."/>
            <person name="Wallis T.P."/>
            <person name="Gorman J.J."/>
            <person name="Lavin M.F."/>
        </authorList>
    </citation>
    <scope>PROTEIN SEQUENCE OF 28-41</scope>
    <scope>IDENTIFICATION BY MASS SPECTROMETRY</scope>
    <source>
        <tissue>Venom</tissue>
    </source>
</reference>
<evidence type="ECO:0000250" key="1"/>
<evidence type="ECO:0000255" key="2"/>
<evidence type="ECO:0000255" key="3">
    <source>
        <dbReference type="PROSITE-ProRule" id="PRU10035"/>
    </source>
</evidence>
<evidence type="ECO:0000255" key="4">
    <source>
        <dbReference type="PROSITE-ProRule" id="PRU10036"/>
    </source>
</evidence>
<evidence type="ECO:0000269" key="5">
    <source>
    </source>
</evidence>
<evidence type="ECO:0000305" key="6"/>
<sequence length="154" mass="17140">MHPAHLLVPLGVCVSLLGAARIPPLPLSLVEFRILIKCANHNSRNVLDYADYGCYCGKGGSGTPVDELDRCCQAHDYCYDDAEKLPACNYRFSGPYWNPYSYKCNEGEVTCTDDNDECKAFICNCDRTAAICFAGAPYNDENFMITIKKKNICQ</sequence>
<feature type="signal peptide" evidence="2">
    <location>
        <begin position="1"/>
        <end position="19"/>
    </location>
</feature>
<feature type="propeptide" id="PRO_0000022950" evidence="5">
    <location>
        <begin position="20"/>
        <end position="27"/>
    </location>
</feature>
<feature type="chain" id="PRO_0000022951" description="Acidic phospholipase A2 2">
    <location>
        <begin position="28"/>
        <end position="154"/>
    </location>
</feature>
<feature type="active site" evidence="1">
    <location>
        <position position="75"/>
    </location>
</feature>
<feature type="active site" evidence="1">
    <location>
        <position position="126"/>
    </location>
</feature>
<feature type="binding site" evidence="1">
    <location>
        <position position="55"/>
    </location>
    <ligand>
        <name>Ca(2+)</name>
        <dbReference type="ChEBI" id="CHEBI:29108"/>
    </ligand>
</feature>
<feature type="binding site" evidence="1">
    <location>
        <position position="57"/>
    </location>
    <ligand>
        <name>Ca(2+)</name>
        <dbReference type="ChEBI" id="CHEBI:29108"/>
    </ligand>
</feature>
<feature type="binding site" evidence="1">
    <location>
        <position position="59"/>
    </location>
    <ligand>
        <name>Ca(2+)</name>
        <dbReference type="ChEBI" id="CHEBI:29108"/>
    </ligand>
</feature>
<feature type="binding site" evidence="1">
    <location>
        <position position="76"/>
    </location>
    <ligand>
        <name>Ca(2+)</name>
        <dbReference type="ChEBI" id="CHEBI:29108"/>
    </ligand>
</feature>
<feature type="disulfide bond" evidence="1">
    <location>
        <begin position="38"/>
        <end position="104"/>
    </location>
</feature>
<feature type="disulfide bond" evidence="1">
    <location>
        <begin position="54"/>
        <end position="153"/>
    </location>
</feature>
<feature type="disulfide bond" evidence="1">
    <location>
        <begin position="56"/>
        <end position="72"/>
    </location>
</feature>
<feature type="disulfide bond" evidence="1">
    <location>
        <begin position="71"/>
        <end position="132"/>
    </location>
</feature>
<feature type="disulfide bond" evidence="1">
    <location>
        <begin position="78"/>
        <end position="125"/>
    </location>
</feature>
<feature type="disulfide bond" evidence="1">
    <location>
        <begin position="88"/>
        <end position="118"/>
    </location>
</feature>
<feature type="disulfide bond" evidence="1">
    <location>
        <begin position="111"/>
        <end position="123"/>
    </location>
</feature>
<keyword id="KW-1204">Blood coagulation cascade activating toxin</keyword>
<keyword id="KW-0106">Calcium</keyword>
<keyword id="KW-0903">Direct protein sequencing</keyword>
<keyword id="KW-1015">Disulfide bond</keyword>
<keyword id="KW-1199">Hemostasis impairing toxin</keyword>
<keyword id="KW-0378">Hydrolase</keyword>
<keyword id="KW-0442">Lipid degradation</keyword>
<keyword id="KW-0443">Lipid metabolism</keyword>
<keyword id="KW-0479">Metal-binding</keyword>
<keyword id="KW-1185">Reference proteome</keyword>
<keyword id="KW-0964">Secreted</keyword>
<keyword id="KW-0732">Signal</keyword>
<keyword id="KW-0800">Toxin</keyword>
<organism>
    <name type="scientific">Pseudonaja textilis</name>
    <name type="common">Eastern brown snake</name>
    <dbReference type="NCBI Taxonomy" id="8673"/>
    <lineage>
        <taxon>Eukaryota</taxon>
        <taxon>Metazoa</taxon>
        <taxon>Chordata</taxon>
        <taxon>Craniata</taxon>
        <taxon>Vertebrata</taxon>
        <taxon>Euteleostomi</taxon>
        <taxon>Lepidosauria</taxon>
        <taxon>Squamata</taxon>
        <taxon>Bifurcata</taxon>
        <taxon>Unidentata</taxon>
        <taxon>Episquamata</taxon>
        <taxon>Toxicofera</taxon>
        <taxon>Serpentes</taxon>
        <taxon>Colubroidea</taxon>
        <taxon>Elapidae</taxon>
        <taxon>Hydrophiinae</taxon>
        <taxon>Pseudonaja</taxon>
    </lineage>
</organism>
<proteinExistence type="evidence at protein level"/>
<accession>Q9W7J3</accession>
<name>PA2A2_PSETE</name>